<feature type="signal peptide" evidence="1">
    <location>
        <begin position="1"/>
        <end position="22"/>
    </location>
</feature>
<feature type="chain" id="PRO_0000354005" description="Porin Omp2a">
    <location>
        <begin position="23"/>
        <end position="321"/>
    </location>
</feature>
<organism>
    <name type="scientific">Brucella abortus (strain S19)</name>
    <dbReference type="NCBI Taxonomy" id="430066"/>
    <lineage>
        <taxon>Bacteria</taxon>
        <taxon>Pseudomonadati</taxon>
        <taxon>Pseudomonadota</taxon>
        <taxon>Alphaproteobacteria</taxon>
        <taxon>Hyphomicrobiales</taxon>
        <taxon>Brucellaceae</taxon>
        <taxon>Brucella/Ochrobactrum group</taxon>
        <taxon>Brucella</taxon>
    </lineage>
</organism>
<comment type="function">
    <text evidence="3">Forms passive diffusion pores that allow small molecular weight hydrophilic materials across the outer membrane.</text>
</comment>
<comment type="subunit">
    <text evidence="6">Monomer.</text>
</comment>
<comment type="subcellular location">
    <subcellularLocation>
        <location evidence="3">Cell outer membrane</location>
        <topology evidence="3">Multi-pass membrane protein</topology>
    </subcellularLocation>
</comment>
<comment type="domain">
    <text evidence="2 4">Consists of 16-stranded beta-barrel sheets, with large surface-exposed loops, that form a transmembrane pore at the center of each barrel. The pore is partially ocluded by a peptide loop that folds into the pore lumen.</text>
</comment>
<comment type="miscellaneous">
    <text evidence="7">The pore formed by Omp2a is larger than the one formed by Omp2b. Omp2b pores have optimal permeability to allow growth and protection against harmful compounds. The larger pore formed by Omp2a may be advantageous for intracellular growth, when the bacterium is competing with the host cell for nutrients whose concentration is particularly low within the phagosome.</text>
</comment>
<comment type="similarity">
    <text evidence="5">Belongs to the alphaproteobacteria porin family.</text>
</comment>
<accession>B2SAB9</accession>
<accession>Q44667</accession>
<accession>Q57EA4</accession>
<evidence type="ECO:0000255" key="1"/>
<evidence type="ECO:0000269" key="2">
    <source>
    </source>
</evidence>
<evidence type="ECO:0000269" key="3">
    <source>
    </source>
</evidence>
<evidence type="ECO:0000269" key="4">
    <source>
    </source>
</evidence>
<evidence type="ECO:0000305" key="5"/>
<evidence type="ECO:0000305" key="6">
    <source>
    </source>
</evidence>
<evidence type="ECO:0000305" key="7">
    <source>
    </source>
</evidence>
<reference key="1">
    <citation type="journal article" date="1989" name="Infect. Immun.">
        <title>DNA sequence and expression of the 36-kilodalton outer membrane protein gene of Brucella abortus.</title>
        <authorList>
            <person name="Ficht T.A."/>
            <person name="Bearden S.W."/>
            <person name="Sowa B.A."/>
            <person name="Adams L.G."/>
        </authorList>
    </citation>
    <scope>NUCLEOTIDE SEQUENCE [GENOMIC DNA]</scope>
    <scope>EXPRESSION</scope>
</reference>
<reference key="2">
    <citation type="journal article" date="2008" name="PLoS ONE">
        <title>Genome sequence of Brucella abortus vaccine strain S19 compared to virulent strains yields candidate virulence genes.</title>
        <authorList>
            <person name="Crasta O.R."/>
            <person name="Folkerts O."/>
            <person name="Fei Z."/>
            <person name="Mane S.P."/>
            <person name="Evans C."/>
            <person name="Martino-Catt S."/>
            <person name="Bricker B."/>
            <person name="Yu G."/>
            <person name="Du L."/>
            <person name="Sobral B.W."/>
        </authorList>
    </citation>
    <scope>NUCLEOTIDE SEQUENCE [LARGE SCALE GENOMIC DNA]</scope>
    <source>
        <strain>S19</strain>
    </source>
</reference>
<reference key="3">
    <citation type="journal article" date="1993" name="Infect. Immun.">
        <title>The omp2 gene locus of Brucella abortus encodes two homologous outer membrane proteins with properties characteristic of bacterial porins.</title>
        <authorList>
            <person name="Marquis H."/>
            <person name="Ficht T.A."/>
        </authorList>
    </citation>
    <scope>FUNCTION AS PORIN</scope>
    <scope>SUBUNIT</scope>
    <scope>SUBCELLULAR LOCATION</scope>
</reference>
<reference key="4">
    <citation type="journal article" date="1997" name="FEMS Microbiol. Lett.">
        <title>Brucella Omp2a and Omp2b porins: single channel measurements and topology prediction.</title>
        <authorList>
            <person name="Mobasheri H."/>
            <person name="Ficht T.A."/>
            <person name="Marquis H."/>
            <person name="Lea E.J.A."/>
            <person name="Lakey J.H."/>
        </authorList>
    </citation>
    <scope>DOMAIN</scope>
    <scope>TOPOLOGY MODEL</scope>
</reference>
<reference key="5">
    <citation type="journal article" date="2000" name="J. Biomol. Struct. Dyn.">
        <title>Topology prediction of Brucella abortus Omp2b and Omp2a porins after critical assessment of transmembrane beta strands prediction by several secondary structure prediction methods.</title>
        <authorList>
            <person name="Paquet J.-Y."/>
            <person name="Vinals C."/>
            <person name="Wouters J."/>
            <person name="Letesson J.-J."/>
            <person name="Depiereux E."/>
        </authorList>
    </citation>
    <scope>DOMAIN</scope>
    <scope>TOPOLOGY MODEL</scope>
</reference>
<protein>
    <recommendedName>
        <fullName>Porin Omp2a</fullName>
    </recommendedName>
</protein>
<proteinExistence type="evidence at protein level"/>
<dbReference type="EMBL" id="M26034">
    <property type="protein sequence ID" value="AAA83993.1"/>
    <property type="molecule type" value="Genomic_DNA"/>
</dbReference>
<dbReference type="EMBL" id="CP000887">
    <property type="protein sequence ID" value="ACD72149.1"/>
    <property type="molecule type" value="Genomic_DNA"/>
</dbReference>
<dbReference type="RefSeq" id="WP_002969883.1">
    <property type="nucleotide sequence ID" value="NC_010742.1"/>
</dbReference>
<dbReference type="SMR" id="B2SAB9"/>
<dbReference type="KEGG" id="bmc:BAbS19_I06180"/>
<dbReference type="HOGENOM" id="CLU_044836_0_0_5"/>
<dbReference type="Proteomes" id="UP000002565">
    <property type="component" value="Chromosome 1"/>
</dbReference>
<dbReference type="GO" id="GO:0009279">
    <property type="term" value="C:cell outer membrane"/>
    <property type="evidence" value="ECO:0007669"/>
    <property type="project" value="UniProtKB-SubCell"/>
</dbReference>
<dbReference type="GO" id="GO:0046930">
    <property type="term" value="C:pore complex"/>
    <property type="evidence" value="ECO:0007669"/>
    <property type="project" value="UniProtKB-KW"/>
</dbReference>
<dbReference type="GO" id="GO:0015288">
    <property type="term" value="F:porin activity"/>
    <property type="evidence" value="ECO:0007669"/>
    <property type="project" value="UniProtKB-KW"/>
</dbReference>
<dbReference type="GO" id="GO:0006811">
    <property type="term" value="P:monoatomic ion transport"/>
    <property type="evidence" value="ECO:0007669"/>
    <property type="project" value="UniProtKB-KW"/>
</dbReference>
<dbReference type="InterPro" id="IPR003684">
    <property type="entry name" value="Porin_alphabac"/>
</dbReference>
<dbReference type="Pfam" id="PF02530">
    <property type="entry name" value="Porin_2"/>
    <property type="match status" value="1"/>
</dbReference>
<sequence length="321" mass="34535">MNIKSLLLGSAAALVAASGAQAADAIVAPEPEAVEYVRVCDAYGAGYFYIPGTETCLRVHGYVRYDVKGGDDVYSGTDRNGWDKGARFALMFNTNSETELGTLGTYTQLRFNYTSNNSRHDGQYGDFSDDRDVADGGVSTGKIAYTFTGGNGFSAVIALEQGGEDVDNDYTIDGYMPHVVGGLKYAGGWGSIAGVVAYDSVIEEWATKVRGDVNITDRFSVWLQGAYSSAATPNQNYGQWGGDWAVWGGAKFIAPEKATFNLQAAHDDWGKTAVTANVAYQLVPGFTITPEVSYTKFGGEWKDTVAEDNAWGGIVRFQRSF</sequence>
<keyword id="KW-0998">Cell outer membrane</keyword>
<keyword id="KW-0406">Ion transport</keyword>
<keyword id="KW-0472">Membrane</keyword>
<keyword id="KW-0626">Porin</keyword>
<keyword id="KW-0732">Signal</keyword>
<keyword id="KW-0812">Transmembrane</keyword>
<keyword id="KW-1134">Transmembrane beta strand</keyword>
<keyword id="KW-0813">Transport</keyword>
<name>OMP2A_BRUA1</name>
<gene>
    <name type="primary">omp2a</name>
    <name type="ordered locus">BAbS19_I06180</name>
</gene>